<proteinExistence type="inferred from homology"/>
<organismHost>
    <name type="scientific">Aves</name>
    <dbReference type="NCBI Taxonomy" id="8782"/>
</organismHost>
<organismHost>
    <name type="scientific">Homo sapiens</name>
    <name type="common">Human</name>
    <dbReference type="NCBI Taxonomy" id="9606"/>
</organismHost>
<organismHost>
    <name type="scientific">Sus scrofa</name>
    <name type="common">Pig</name>
    <dbReference type="NCBI Taxonomy" id="9823"/>
</organismHost>
<keyword id="KW-1132">Decay of host mRNAs by virus</keyword>
<keyword id="KW-1262">Eukaryotic host gene expression shutoff by virus</keyword>
<keyword id="KW-1035">Host cytoplasm</keyword>
<keyword id="KW-1190">Host gene expression shutoff by virus</keyword>
<keyword id="KW-1192">Host mRNA suppression by virus</keyword>
<keyword id="KW-1048">Host nucleus</keyword>
<keyword id="KW-0945">Host-virus interaction</keyword>
<keyword id="KW-0688">Ribosomal frameshifting</keyword>
<gene>
    <name type="primary">PA</name>
</gene>
<name>PAX_I54A2</name>
<comment type="function">
    <text evidence="1 4">Plays a major role in the shutoff of the host protein expression by cleaving mRNAs probably via an endonuclease activity. This host shutoff allows the virus to escape from the host antiviral response (By similarity). Hijacks host RNA splicing machinery to selectively target host RNAs containing introns for destruction. This may explain the preferential degradation of RNAs that have undergone co- or post-transcriptional processing (By similarity).</text>
</comment>
<comment type="subcellular location">
    <subcellularLocation>
        <location evidence="4">Host cytoplasm</location>
    </subcellularLocation>
    <subcellularLocation>
        <location evidence="4">Host nucleus</location>
    </subcellularLocation>
</comment>
<comment type="alternative products">
    <event type="ribosomal frameshifting"/>
    <isoform>
        <id>P0DJS7-1</id>
        <name>PA-X</name>
        <sequence type="displayed"/>
    </isoform>
    <isoform>
        <id>A4K150-1</id>
        <name>PA</name>
        <sequence type="external"/>
    </isoform>
</comment>
<comment type="domain">
    <text evidence="1 4">The probable endonuclease active site in the N-terminus and the basic amino acid cluster in the C-terminus are important for the shutoff activity. The C-terminus acts as a nuclear localization signal (By similarity). The C-terminus is recruited to host protein complexes involved in nuclear Pol II RNA processing (By similarity).</text>
</comment>
<comment type="similarity">
    <text evidence="6">Belongs to the influenza viruses PA-X family.</text>
</comment>
<accession>P0DJS7</accession>
<feature type="chain" id="PRO_0000419390" description="Protein PA-X">
    <location>
        <begin position="1"/>
        <end position="252"/>
    </location>
</feature>
<feature type="active site" evidence="2">
    <location>
        <position position="80"/>
    </location>
</feature>
<feature type="active site" evidence="2">
    <location>
        <position position="108"/>
    </location>
</feature>
<feature type="site" description="Important for efficient shutoff activity" evidence="5">
    <location>
        <position position="28"/>
    </location>
</feature>
<feature type="site" description="Important for efficient shutoff activity" evidence="5">
    <location>
        <position position="65"/>
    </location>
</feature>
<feature type="site" description="Important for efficient shutoff activity and nuclear localization" evidence="4">
    <location>
        <position position="195"/>
    </location>
</feature>
<feature type="site" description="Important for efficient shutoff activity and nuclear localization" evidence="4">
    <location>
        <position position="198"/>
    </location>
</feature>
<feature type="site" description="Important for efficient shutoff activity and nuclear localization" evidence="4">
    <location>
        <position position="199"/>
    </location>
</feature>
<feature type="site" description="Important for efficient shutoff activity" evidence="3">
    <location>
        <position position="202"/>
    </location>
</feature>
<feature type="site" description="Important for efficient shutoff activity" evidence="3">
    <location>
        <position position="203"/>
    </location>
</feature>
<feature type="site" description="Important for efficient shutoff activity" evidence="3">
    <location>
        <position position="206"/>
    </location>
</feature>
<evidence type="ECO:0000250" key="1">
    <source>
        <dbReference type="UniProtKB" id="P0CK64"/>
    </source>
</evidence>
<evidence type="ECO:0000250" key="2">
    <source>
        <dbReference type="UniProtKB" id="P0CK68"/>
    </source>
</evidence>
<evidence type="ECO:0000250" key="3">
    <source>
        <dbReference type="UniProtKB" id="P0DJW8"/>
    </source>
</evidence>
<evidence type="ECO:0000250" key="4">
    <source>
        <dbReference type="UniProtKB" id="P0DXO5"/>
    </source>
</evidence>
<evidence type="ECO:0000250" key="5">
    <source>
        <dbReference type="UniProtKB" id="P0DXO6"/>
    </source>
</evidence>
<evidence type="ECO:0000305" key="6"/>
<reference key="1">
    <citation type="submission" date="2007-03" db="EMBL/GenBank/DDBJ databases">
        <title>The NIAID influenza genome sequencing project.</title>
        <authorList>
            <person name="Ghedin E."/>
            <person name="Spiro D."/>
            <person name="Miller N."/>
            <person name="Zaborsky J."/>
            <person name="Feldblyum T."/>
            <person name="Subbu V."/>
            <person name="Shumway M."/>
            <person name="Sparenborg J."/>
            <person name="Groveman L."/>
            <person name="Halpin R."/>
            <person name="Sitz J."/>
            <person name="Koo H."/>
            <person name="Salzberg S.L."/>
            <person name="Webster R.G."/>
            <person name="Hoffmann E."/>
            <person name="Krauss S."/>
            <person name="Naeve C."/>
            <person name="Bao Y."/>
            <person name="Bolotov P."/>
            <person name="Dernovoy D."/>
            <person name="Kiryutin B."/>
            <person name="Lipman D.J."/>
            <person name="Tatusova T."/>
        </authorList>
    </citation>
    <scope>NUCLEOTIDE SEQUENCE [GENOMIC RNA]</scope>
</reference>
<reference key="2">
    <citation type="submission" date="2007-03" db="EMBL/GenBank/DDBJ databases">
        <authorList>
            <consortium name="The NIAID Influenza Genome Sequencing Consortium"/>
        </authorList>
    </citation>
    <scope>NUCLEOTIDE SEQUENCE [GENOMIC RNA]</scope>
</reference>
<protein>
    <recommendedName>
        <fullName>Protein PA-X</fullName>
    </recommendedName>
</protein>
<organism>
    <name type="scientific">Influenza A virus (strain A/Malaysia:Malaya/302/1954 H1N1)</name>
    <dbReference type="NCBI Taxonomy" id="425566"/>
    <lineage>
        <taxon>Viruses</taxon>
        <taxon>Riboviria</taxon>
        <taxon>Orthornavirae</taxon>
        <taxon>Negarnaviricota</taxon>
        <taxon>Polyploviricotina</taxon>
        <taxon>Insthoviricetes</taxon>
        <taxon>Articulavirales</taxon>
        <taxon>Orthomyxoviridae</taxon>
        <taxon>Alphainfluenzavirus</taxon>
        <taxon>Alphainfluenzavirus influenzae</taxon>
        <taxon>Influenza A virus</taxon>
    </lineage>
</organism>
<sequence>MEDFVRQCFNPMIVELAEKAMKEYGENLKIETNKFAAICTHLEVCFMYSDFHFINEQGESIIVELDDPNALLKHRFEIIEGRDRTMAWTVVNSICNTTGAEKPKFLPDLYDYKENRFIEIGVTRREVHIYYLEKANKIKSEKTHIHIFSFTGEEMATKADYTLDEESRARIKTRLFTIRQEMASRGLWDSFVSPREAKKQLKKDLKSQEQCAGSLTKVSRRTSPALRILEPMWMDSNRTATLRASFLKCPKK</sequence>
<dbReference type="EMBL" id="CY021058">
    <property type="status" value="NOT_ANNOTATED_CDS"/>
    <property type="molecule type" value="Viral_cRNA"/>
</dbReference>
<dbReference type="SMR" id="P0DJS7"/>
<dbReference type="Proteomes" id="UP000008219">
    <property type="component" value="Genome"/>
</dbReference>
<dbReference type="GO" id="GO:0003723">
    <property type="term" value="F:RNA binding"/>
    <property type="evidence" value="ECO:0007669"/>
    <property type="project" value="InterPro"/>
</dbReference>
<dbReference type="GO" id="GO:0039694">
    <property type="term" value="P:viral RNA genome replication"/>
    <property type="evidence" value="ECO:0007669"/>
    <property type="project" value="InterPro"/>
</dbReference>
<dbReference type="GO" id="GO:0075523">
    <property type="term" value="P:viral translational frameshifting"/>
    <property type="evidence" value="ECO:0007669"/>
    <property type="project" value="UniProtKB-KW"/>
</dbReference>
<dbReference type="FunFam" id="3.40.91.90:FF:000001">
    <property type="entry name" value="Polymerase acidic protein"/>
    <property type="match status" value="1"/>
</dbReference>
<dbReference type="Gene3D" id="3.40.91.90">
    <property type="entry name" value="Influenza RNA-dependent RNA polymerase subunit PA, endonuclease domain"/>
    <property type="match status" value="1"/>
</dbReference>
<dbReference type="InterPro" id="IPR001009">
    <property type="entry name" value="PA/PA-X"/>
</dbReference>
<dbReference type="InterPro" id="IPR038372">
    <property type="entry name" value="PA/PA-X_sf"/>
</dbReference>
<dbReference type="Pfam" id="PF00603">
    <property type="entry name" value="Flu_PA"/>
    <property type="match status" value="1"/>
</dbReference>